<protein>
    <recommendedName>
        <fullName evidence="5">Class I hydrophobin 10</fullName>
    </recommendedName>
</protein>
<comment type="function">
    <text evidence="6">Aerial growth, conidiation, and dispersal of filamentous fungi in the environment rely upon a capability of their secreting small amphipathic proteins called hydrophobins (HPBs) with low sequence identity. Class I can self-assemble into an outermost layer of rodlet bundles on aerial cell surfaces, conferring cellular hydrophobicity that supports fungal growth, development and dispersal; whereas Class II form highly ordered films at water-air interfaces through intermolecular interactions but contribute nothing to the rodlet structure.</text>
</comment>
<comment type="subunit">
    <text evidence="1">Self-assembles to form functional amyloid fibrils called rodlets. Self-assembly into fibrillar rodlets occurs spontaneously at hydrophobic:hydrophilic interfaces and the rodlets further associate laterally to form amphipathic monolayers.</text>
</comment>
<comment type="subcellular location">
    <subcellularLocation>
        <location evidence="1">Secreted</location>
    </subcellularLocation>
    <subcellularLocation>
        <location evidence="1">Secreted</location>
        <location evidence="1">Cell wall</location>
    </subcellularLocation>
</comment>
<comment type="developmental stage">
    <text evidence="4">Shows relatively higher levels of expression in the primordial stages and relatively low levels in the mycelial stage.</text>
</comment>
<comment type="induction">
    <text evidence="4">A CT-rich motif, which is often found immediately upstream of the transcription start point of highly expressed filamentous fungal genes, is present at the expected position.</text>
</comment>
<comment type="similarity">
    <text evidence="6">Belongs to the fungal hydrophobin family.</text>
</comment>
<reference key="1">
    <citation type="journal article" date="2016" name="Mycoscience">
        <title>Further characterization of hydrophobin genes in genome of Flammulina velutipes.</title>
        <authorList>
            <person name="Kim H.-I."/>
            <person name="Lee C.-S."/>
            <person name="Park Y.-J."/>
        </authorList>
    </citation>
    <scope>NUCLEOTIDE SEQUENCE [GENOMIC DNA]</scope>
    <scope>DEVELOPMENTAL STAGE</scope>
    <scope>INDUCTION</scope>
</reference>
<accession>A0A1I9QLD1</accession>
<keyword id="KW-0134">Cell wall</keyword>
<keyword id="KW-1015">Disulfide bond</keyword>
<keyword id="KW-0325">Glycoprotein</keyword>
<keyword id="KW-0964">Secreted</keyword>
<keyword id="KW-0732">Signal</keyword>
<proteinExistence type="evidence at transcript level"/>
<evidence type="ECO:0000250" key="1">
    <source>
        <dbReference type="UniProtKB" id="Q04571"/>
    </source>
</evidence>
<evidence type="ECO:0000255" key="2"/>
<evidence type="ECO:0000255" key="3">
    <source>
        <dbReference type="PROSITE-ProRule" id="PRU00498"/>
    </source>
</evidence>
<evidence type="ECO:0000269" key="4">
    <source ref="1"/>
</evidence>
<evidence type="ECO:0000303" key="5">
    <source ref="1"/>
</evidence>
<evidence type="ECO:0000305" key="6"/>
<gene>
    <name evidence="5" type="primary">Hyd-10</name>
</gene>
<sequence>MFARCVATIFASLLVTLAVASPEYYAPQGSTAPAPAGQCNVGNQQCCNTVQEASSDPVAGLLGLLGINVQDVTGLVGLTCNPITGIGGLNSGCDASPVCCENNSFGSLISIGCIPISL</sequence>
<organism>
    <name type="scientific">Flammulina velutipes</name>
    <name type="common">Agaricus velutipes</name>
    <dbReference type="NCBI Taxonomy" id="38945"/>
    <lineage>
        <taxon>Eukaryota</taxon>
        <taxon>Fungi</taxon>
        <taxon>Dikarya</taxon>
        <taxon>Basidiomycota</taxon>
        <taxon>Agaricomycotina</taxon>
        <taxon>Agaricomycetes</taxon>
        <taxon>Agaricomycetidae</taxon>
        <taxon>Agaricales</taxon>
        <taxon>Marasmiineae</taxon>
        <taxon>Physalacriaceae</taxon>
        <taxon>Flammulina</taxon>
    </lineage>
</organism>
<name>HYD10_FLAVE</name>
<feature type="signal peptide" evidence="2">
    <location>
        <begin position="1"/>
        <end position="20"/>
    </location>
</feature>
<feature type="chain" id="PRO_5013986598" description="Class I hydrophobin 10">
    <location>
        <begin position="21"/>
        <end position="118"/>
    </location>
</feature>
<feature type="glycosylation site" description="N-linked (GlcNAc...) asparagine" evidence="3">
    <location>
        <position position="102"/>
    </location>
</feature>
<feature type="disulfide bond" evidence="1">
    <location>
        <begin position="39"/>
        <end position="99"/>
    </location>
</feature>
<feature type="disulfide bond" evidence="1">
    <location>
        <begin position="46"/>
        <end position="93"/>
    </location>
</feature>
<feature type="disulfide bond" evidence="1">
    <location>
        <begin position="47"/>
        <end position="80"/>
    </location>
</feature>
<feature type="disulfide bond" evidence="1">
    <location>
        <begin position="100"/>
        <end position="113"/>
    </location>
</feature>
<dbReference type="EMBL" id="KT868842">
    <property type="protein sequence ID" value="AOV80990.1"/>
    <property type="molecule type" value="Genomic_DNA"/>
</dbReference>
<dbReference type="SMR" id="A0A1I9QLD1"/>
<dbReference type="GO" id="GO:0005576">
    <property type="term" value="C:extracellular region"/>
    <property type="evidence" value="ECO:0007669"/>
    <property type="project" value="UniProtKB-KW"/>
</dbReference>
<dbReference type="GO" id="GO:0009277">
    <property type="term" value="C:fungal-type cell wall"/>
    <property type="evidence" value="ECO:0007669"/>
    <property type="project" value="InterPro"/>
</dbReference>
<dbReference type="GO" id="GO:0005199">
    <property type="term" value="F:structural constituent of cell wall"/>
    <property type="evidence" value="ECO:0007669"/>
    <property type="project" value="InterPro"/>
</dbReference>
<dbReference type="CDD" id="cd23507">
    <property type="entry name" value="hydrophobin_I"/>
    <property type="match status" value="1"/>
</dbReference>
<dbReference type="InterPro" id="IPR001338">
    <property type="entry name" value="Hydrophobin"/>
</dbReference>
<dbReference type="Pfam" id="PF01185">
    <property type="entry name" value="Hydrophobin"/>
    <property type="match status" value="1"/>
</dbReference>
<dbReference type="SMART" id="SM00075">
    <property type="entry name" value="HYDRO"/>
    <property type="match status" value="1"/>
</dbReference>